<protein>
    <recommendedName>
        <fullName evidence="1">Holo-[acyl-carrier-protein] synthase</fullName>
        <shortName evidence="1">Holo-ACP synthase</shortName>
        <ecNumber evidence="1">2.7.8.7</ecNumber>
    </recommendedName>
    <alternativeName>
        <fullName evidence="1">4'-phosphopantetheinyl transferase AcpS</fullName>
    </alternativeName>
</protein>
<reference key="1">
    <citation type="journal article" date="2005" name="Science">
        <title>Life at depth: Photobacterium profundum genome sequence and expression analysis.</title>
        <authorList>
            <person name="Vezzi A."/>
            <person name="Campanaro S."/>
            <person name="D'Angelo M."/>
            <person name="Simonato F."/>
            <person name="Vitulo N."/>
            <person name="Lauro F.M."/>
            <person name="Cestaro A."/>
            <person name="Malacrida G."/>
            <person name="Simionati B."/>
            <person name="Cannata N."/>
            <person name="Romualdi C."/>
            <person name="Bartlett D.H."/>
            <person name="Valle G."/>
        </authorList>
    </citation>
    <scope>NUCLEOTIDE SEQUENCE [LARGE SCALE GENOMIC DNA]</scope>
    <source>
        <strain>ATCC BAA-1253 / SS9</strain>
    </source>
</reference>
<gene>
    <name evidence="1" type="primary">acpS</name>
    <name type="ordered locus">PBPRA3085</name>
</gene>
<comment type="function">
    <text evidence="1">Transfers the 4'-phosphopantetheine moiety from coenzyme A to a Ser of acyl-carrier-protein.</text>
</comment>
<comment type="catalytic activity">
    <reaction evidence="1">
        <text>apo-[ACP] + CoA = holo-[ACP] + adenosine 3',5'-bisphosphate + H(+)</text>
        <dbReference type="Rhea" id="RHEA:12068"/>
        <dbReference type="Rhea" id="RHEA-COMP:9685"/>
        <dbReference type="Rhea" id="RHEA-COMP:9690"/>
        <dbReference type="ChEBI" id="CHEBI:15378"/>
        <dbReference type="ChEBI" id="CHEBI:29999"/>
        <dbReference type="ChEBI" id="CHEBI:57287"/>
        <dbReference type="ChEBI" id="CHEBI:58343"/>
        <dbReference type="ChEBI" id="CHEBI:64479"/>
        <dbReference type="EC" id="2.7.8.7"/>
    </reaction>
</comment>
<comment type="cofactor">
    <cofactor evidence="1">
        <name>Mg(2+)</name>
        <dbReference type="ChEBI" id="CHEBI:18420"/>
    </cofactor>
</comment>
<comment type="subcellular location">
    <subcellularLocation>
        <location evidence="1">Cytoplasm</location>
    </subcellularLocation>
</comment>
<comment type="similarity">
    <text evidence="1">Belongs to the P-Pant transferase superfamily. AcpS family.</text>
</comment>
<name>ACPS_PHOPR</name>
<proteinExistence type="inferred from homology"/>
<keyword id="KW-0963">Cytoplasm</keyword>
<keyword id="KW-0275">Fatty acid biosynthesis</keyword>
<keyword id="KW-0276">Fatty acid metabolism</keyword>
<keyword id="KW-0444">Lipid biosynthesis</keyword>
<keyword id="KW-0443">Lipid metabolism</keyword>
<keyword id="KW-0460">Magnesium</keyword>
<keyword id="KW-0479">Metal-binding</keyword>
<keyword id="KW-1185">Reference proteome</keyword>
<keyword id="KW-0808">Transferase</keyword>
<sequence length="126" mass="13533">MAIIGLGTDIADIERVDKVFARSGDAFAERILAPSELVIYHSLKLKARYLAKRFAVKEAASKALGTGIACGVSFQDFIVSNDERGKPLLSLSGKAAELAESMGVKHVHLTLADEKRYAVATVILES</sequence>
<accession>Q6LMS5</accession>
<evidence type="ECO:0000255" key="1">
    <source>
        <dbReference type="HAMAP-Rule" id="MF_00101"/>
    </source>
</evidence>
<feature type="chain" id="PRO_0000175685" description="Holo-[acyl-carrier-protein] synthase">
    <location>
        <begin position="1"/>
        <end position="126"/>
    </location>
</feature>
<feature type="binding site" evidence="1">
    <location>
        <position position="9"/>
    </location>
    <ligand>
        <name>Mg(2+)</name>
        <dbReference type="ChEBI" id="CHEBI:18420"/>
    </ligand>
</feature>
<feature type="binding site" evidence="1">
    <location>
        <position position="58"/>
    </location>
    <ligand>
        <name>Mg(2+)</name>
        <dbReference type="ChEBI" id="CHEBI:18420"/>
    </ligand>
</feature>
<dbReference type="EC" id="2.7.8.7" evidence="1"/>
<dbReference type="EMBL" id="CR378673">
    <property type="protein sequence ID" value="CAG21401.1"/>
    <property type="molecule type" value="Genomic_DNA"/>
</dbReference>
<dbReference type="RefSeq" id="WP_011219660.1">
    <property type="nucleotide sequence ID" value="NC_006370.1"/>
</dbReference>
<dbReference type="SMR" id="Q6LMS5"/>
<dbReference type="STRING" id="298386.PBPRA3085"/>
<dbReference type="KEGG" id="ppr:PBPRA3085"/>
<dbReference type="eggNOG" id="COG0736">
    <property type="taxonomic scope" value="Bacteria"/>
</dbReference>
<dbReference type="HOGENOM" id="CLU_089696_3_1_6"/>
<dbReference type="Proteomes" id="UP000000593">
    <property type="component" value="Chromosome 1"/>
</dbReference>
<dbReference type="GO" id="GO:0005737">
    <property type="term" value="C:cytoplasm"/>
    <property type="evidence" value="ECO:0007669"/>
    <property type="project" value="UniProtKB-SubCell"/>
</dbReference>
<dbReference type="GO" id="GO:0008897">
    <property type="term" value="F:holo-[acyl-carrier-protein] synthase activity"/>
    <property type="evidence" value="ECO:0007669"/>
    <property type="project" value="UniProtKB-UniRule"/>
</dbReference>
<dbReference type="GO" id="GO:0000287">
    <property type="term" value="F:magnesium ion binding"/>
    <property type="evidence" value="ECO:0007669"/>
    <property type="project" value="UniProtKB-UniRule"/>
</dbReference>
<dbReference type="GO" id="GO:0006633">
    <property type="term" value="P:fatty acid biosynthetic process"/>
    <property type="evidence" value="ECO:0007669"/>
    <property type="project" value="UniProtKB-UniRule"/>
</dbReference>
<dbReference type="FunFam" id="3.90.470.20:FF:000001">
    <property type="entry name" value="Holo-[acyl-carrier-protein] synthase"/>
    <property type="match status" value="1"/>
</dbReference>
<dbReference type="Gene3D" id="3.90.470.20">
    <property type="entry name" value="4'-phosphopantetheinyl transferase domain"/>
    <property type="match status" value="1"/>
</dbReference>
<dbReference type="HAMAP" id="MF_00101">
    <property type="entry name" value="AcpS"/>
    <property type="match status" value="1"/>
</dbReference>
<dbReference type="InterPro" id="IPR008278">
    <property type="entry name" value="4-PPantetheinyl_Trfase_dom"/>
</dbReference>
<dbReference type="InterPro" id="IPR037143">
    <property type="entry name" value="4-PPantetheinyl_Trfase_dom_sf"/>
</dbReference>
<dbReference type="InterPro" id="IPR002582">
    <property type="entry name" value="ACPS"/>
</dbReference>
<dbReference type="InterPro" id="IPR004568">
    <property type="entry name" value="Ppantetheine-prot_Trfase_dom"/>
</dbReference>
<dbReference type="NCBIfam" id="TIGR00516">
    <property type="entry name" value="acpS"/>
    <property type="match status" value="1"/>
</dbReference>
<dbReference type="NCBIfam" id="TIGR00556">
    <property type="entry name" value="pantethn_trn"/>
    <property type="match status" value="1"/>
</dbReference>
<dbReference type="Pfam" id="PF01648">
    <property type="entry name" value="ACPS"/>
    <property type="match status" value="1"/>
</dbReference>
<dbReference type="SUPFAM" id="SSF56214">
    <property type="entry name" value="4'-phosphopantetheinyl transferase"/>
    <property type="match status" value="1"/>
</dbReference>
<organism>
    <name type="scientific">Photobacterium profundum (strain SS9)</name>
    <dbReference type="NCBI Taxonomy" id="298386"/>
    <lineage>
        <taxon>Bacteria</taxon>
        <taxon>Pseudomonadati</taxon>
        <taxon>Pseudomonadota</taxon>
        <taxon>Gammaproteobacteria</taxon>
        <taxon>Vibrionales</taxon>
        <taxon>Vibrionaceae</taxon>
        <taxon>Photobacterium</taxon>
    </lineage>
</organism>